<dbReference type="EC" id="1.6.2.2"/>
<dbReference type="EMBL" id="BC089945">
    <property type="protein sequence ID" value="AAH89945.1"/>
    <property type="molecule type" value="mRNA"/>
</dbReference>
<dbReference type="RefSeq" id="NP_001013144.1">
    <property type="nucleotide sequence ID" value="NM_001013126.1"/>
</dbReference>
<dbReference type="SMR" id="Q5EB81"/>
<dbReference type="FunCoup" id="Q5EB81">
    <property type="interactions" value="1932"/>
</dbReference>
<dbReference type="STRING" id="10116.ENSRNOP00000057400"/>
<dbReference type="iPTMnet" id="Q5EB81"/>
<dbReference type="PhosphoSitePlus" id="Q5EB81"/>
<dbReference type="SwissPalm" id="Q5EB81"/>
<dbReference type="jPOST" id="Q5EB81"/>
<dbReference type="PaxDb" id="10116-ENSRNOP00000057400"/>
<dbReference type="GeneID" id="304805"/>
<dbReference type="KEGG" id="rno:304805"/>
<dbReference type="UCSC" id="RGD:1306084">
    <property type="organism name" value="rat"/>
</dbReference>
<dbReference type="AGR" id="RGD:1306084"/>
<dbReference type="CTD" id="51706"/>
<dbReference type="RGD" id="1306084">
    <property type="gene designation" value="Cyb5r1"/>
</dbReference>
<dbReference type="eggNOG" id="KOG0534">
    <property type="taxonomic scope" value="Eukaryota"/>
</dbReference>
<dbReference type="InParanoid" id="Q5EB81"/>
<dbReference type="OrthoDB" id="50514at9989"/>
<dbReference type="PhylomeDB" id="Q5EB81"/>
<dbReference type="Reactome" id="R-RNO-114608">
    <property type="pathway name" value="Platelet degranulation"/>
</dbReference>
<dbReference type="Reactome" id="R-RNO-1237044">
    <property type="pathway name" value="Erythrocytes take up carbon dioxide and release oxygen"/>
</dbReference>
<dbReference type="PRO" id="PR:Q5EB81"/>
<dbReference type="Proteomes" id="UP000002494">
    <property type="component" value="Unplaced"/>
</dbReference>
<dbReference type="GO" id="GO:0005789">
    <property type="term" value="C:endoplasmic reticulum membrane"/>
    <property type="evidence" value="ECO:0007669"/>
    <property type="project" value="UniProtKB-ARBA"/>
</dbReference>
<dbReference type="GO" id="GO:0005739">
    <property type="term" value="C:mitochondrion"/>
    <property type="evidence" value="ECO:0000318"/>
    <property type="project" value="GO_Central"/>
</dbReference>
<dbReference type="GO" id="GO:0004128">
    <property type="term" value="F:cytochrome-b5 reductase activity, acting on NAD(P)H"/>
    <property type="evidence" value="ECO:0007669"/>
    <property type="project" value="UniProtKB-EC"/>
</dbReference>
<dbReference type="GO" id="GO:0071949">
    <property type="term" value="F:FAD binding"/>
    <property type="evidence" value="ECO:0000318"/>
    <property type="project" value="GO_Central"/>
</dbReference>
<dbReference type="GO" id="GO:0016126">
    <property type="term" value="P:sterol biosynthetic process"/>
    <property type="evidence" value="ECO:0007669"/>
    <property type="project" value="UniProtKB-KW"/>
</dbReference>
<dbReference type="CDD" id="cd06183">
    <property type="entry name" value="cyt_b5_reduct_like"/>
    <property type="match status" value="1"/>
</dbReference>
<dbReference type="FunFam" id="2.40.30.10:FF:000021">
    <property type="entry name" value="NADH-cytochrome b5 reductase"/>
    <property type="match status" value="1"/>
</dbReference>
<dbReference type="FunFam" id="3.40.50.80:FF:000005">
    <property type="entry name" value="NADH-cytochrome b5 reductase"/>
    <property type="match status" value="1"/>
</dbReference>
<dbReference type="Gene3D" id="3.40.50.80">
    <property type="entry name" value="Nucleotide-binding domain of ferredoxin-NADP reductase (FNR) module"/>
    <property type="match status" value="1"/>
</dbReference>
<dbReference type="Gene3D" id="2.40.30.10">
    <property type="entry name" value="Translation factors"/>
    <property type="match status" value="1"/>
</dbReference>
<dbReference type="InterPro" id="IPR001834">
    <property type="entry name" value="CBR-like"/>
</dbReference>
<dbReference type="InterPro" id="IPR008333">
    <property type="entry name" value="Cbr1-like_FAD-bd_dom"/>
</dbReference>
<dbReference type="InterPro" id="IPR017927">
    <property type="entry name" value="FAD-bd_FR_type"/>
</dbReference>
<dbReference type="InterPro" id="IPR001709">
    <property type="entry name" value="Flavoprot_Pyr_Nucl_cyt_Rdtase"/>
</dbReference>
<dbReference type="InterPro" id="IPR039261">
    <property type="entry name" value="FNR_nucleotide-bd"/>
</dbReference>
<dbReference type="InterPro" id="IPR001433">
    <property type="entry name" value="OxRdtase_FAD/NAD-bd"/>
</dbReference>
<dbReference type="InterPro" id="IPR017938">
    <property type="entry name" value="Riboflavin_synthase-like_b-brl"/>
</dbReference>
<dbReference type="PANTHER" id="PTHR19370">
    <property type="entry name" value="NADH-CYTOCHROME B5 REDUCTASE"/>
    <property type="match status" value="1"/>
</dbReference>
<dbReference type="PANTHER" id="PTHR19370:SF74">
    <property type="entry name" value="NADH-CYTOCHROME B5 REDUCTASE 1"/>
    <property type="match status" value="1"/>
</dbReference>
<dbReference type="Pfam" id="PF00970">
    <property type="entry name" value="FAD_binding_6"/>
    <property type="match status" value="1"/>
</dbReference>
<dbReference type="Pfam" id="PF00175">
    <property type="entry name" value="NAD_binding_1"/>
    <property type="match status" value="1"/>
</dbReference>
<dbReference type="PRINTS" id="PR00406">
    <property type="entry name" value="CYTB5RDTASE"/>
</dbReference>
<dbReference type="PRINTS" id="PR00371">
    <property type="entry name" value="FPNCR"/>
</dbReference>
<dbReference type="SUPFAM" id="SSF52343">
    <property type="entry name" value="Ferredoxin reductase-like, C-terminal NADP-linked domain"/>
    <property type="match status" value="1"/>
</dbReference>
<dbReference type="SUPFAM" id="SSF63380">
    <property type="entry name" value="Riboflavin synthase domain-like"/>
    <property type="match status" value="1"/>
</dbReference>
<dbReference type="PROSITE" id="PS51384">
    <property type="entry name" value="FAD_FR"/>
    <property type="match status" value="1"/>
</dbReference>
<keyword id="KW-0274">FAD</keyword>
<keyword id="KW-0285">Flavoprotein</keyword>
<keyword id="KW-0444">Lipid biosynthesis</keyword>
<keyword id="KW-0443">Lipid metabolism</keyword>
<keyword id="KW-0472">Membrane</keyword>
<keyword id="KW-0520">NAD</keyword>
<keyword id="KW-0560">Oxidoreductase</keyword>
<keyword id="KW-1185">Reference proteome</keyword>
<keyword id="KW-0752">Steroid biosynthesis</keyword>
<keyword id="KW-0753">Steroid metabolism</keyword>
<keyword id="KW-0756">Sterol biosynthesis</keyword>
<keyword id="KW-1207">Sterol metabolism</keyword>
<keyword id="KW-0812">Transmembrane</keyword>
<keyword id="KW-1133">Transmembrane helix</keyword>
<organism>
    <name type="scientific">Rattus norvegicus</name>
    <name type="common">Rat</name>
    <dbReference type="NCBI Taxonomy" id="10116"/>
    <lineage>
        <taxon>Eukaryota</taxon>
        <taxon>Metazoa</taxon>
        <taxon>Chordata</taxon>
        <taxon>Craniata</taxon>
        <taxon>Vertebrata</taxon>
        <taxon>Euteleostomi</taxon>
        <taxon>Mammalia</taxon>
        <taxon>Eutheria</taxon>
        <taxon>Euarchontoglires</taxon>
        <taxon>Glires</taxon>
        <taxon>Rodentia</taxon>
        <taxon>Myomorpha</taxon>
        <taxon>Muroidea</taxon>
        <taxon>Muridae</taxon>
        <taxon>Murinae</taxon>
        <taxon>Rattus</taxon>
    </lineage>
</organism>
<accession>Q5EB81</accession>
<name>NB5R1_RAT</name>
<comment type="function">
    <text evidence="1">NADH-cytochrome b5 reductases are involved in desaturation and elongation of fatty acids, cholesterol biosynthesis, drug metabolism, and, in erythrocyte, methemoglobin reduction.</text>
</comment>
<comment type="catalytic activity">
    <reaction>
        <text>2 Fe(III)-[cytochrome b5] + NADH = 2 Fe(II)-[cytochrome b5] + NAD(+) + H(+)</text>
        <dbReference type="Rhea" id="RHEA:46680"/>
        <dbReference type="Rhea" id="RHEA-COMP:10438"/>
        <dbReference type="Rhea" id="RHEA-COMP:10439"/>
        <dbReference type="ChEBI" id="CHEBI:15378"/>
        <dbReference type="ChEBI" id="CHEBI:29033"/>
        <dbReference type="ChEBI" id="CHEBI:29034"/>
        <dbReference type="ChEBI" id="CHEBI:57540"/>
        <dbReference type="ChEBI" id="CHEBI:57945"/>
        <dbReference type="EC" id="1.6.2.2"/>
    </reaction>
</comment>
<comment type="cofactor">
    <cofactor evidence="1">
        <name>FAD</name>
        <dbReference type="ChEBI" id="CHEBI:57692"/>
    </cofactor>
</comment>
<comment type="subcellular location">
    <subcellularLocation>
        <location evidence="4">Membrane</location>
        <topology evidence="4">Single-pass membrane protein</topology>
    </subcellularLocation>
</comment>
<comment type="similarity">
    <text evidence="4">Belongs to the flavoprotein pyridine nucleotide cytochrome reductase family.</text>
</comment>
<protein>
    <recommendedName>
        <fullName>NADH-cytochrome b5 reductase 1</fullName>
        <shortName>b5R.1</shortName>
        <ecNumber>1.6.2.2</ecNumber>
    </recommendedName>
</protein>
<evidence type="ECO:0000250" key="1"/>
<evidence type="ECO:0000255" key="2"/>
<evidence type="ECO:0000255" key="3">
    <source>
        <dbReference type="PROSITE-ProRule" id="PRU00716"/>
    </source>
</evidence>
<evidence type="ECO:0000305" key="4"/>
<proteinExistence type="evidence at transcript level"/>
<gene>
    <name type="primary">Cyb5r1</name>
</gene>
<sequence length="305" mass="34223">MGIQPSPVLLASLGVGLFTLFGLALGTYLVRRSRRPQVTLQDPDEKYLLRLLDKTTVSHNTRRFRFALPTAHHILGLPVGKHVYLSARIDGSQVIRPYTPVTSDEDQGYVDLVIKVYLKGVHPKFSEGGKMSQYLDSLKIGDVVEFRGPSGLLSYAGKGNFNIQPNKKSPPELRVAKKLGMIAGGTGITPMLQLIRAILKVPEDPTQCFLLFANQTEKDIILREDLEELQAQYPIRFKLWFTLDYPPEDWTYSKGFVTADMIQEHLPAPAEDVLLLLCGPPPMVQLACHPNLDKLGYSQKMRFTY</sequence>
<feature type="chain" id="PRO_0000287547" description="NADH-cytochrome b5 reductase 1">
    <location>
        <begin position="1"/>
        <end position="305"/>
    </location>
</feature>
<feature type="transmembrane region" description="Helical" evidence="2">
    <location>
        <begin position="8"/>
        <end position="28"/>
    </location>
</feature>
<feature type="domain" description="FAD-binding FR-type" evidence="3">
    <location>
        <begin position="44"/>
        <end position="156"/>
    </location>
</feature>
<feature type="binding site" evidence="1">
    <location>
        <begin position="136"/>
        <end position="166"/>
    </location>
    <ligand>
        <name>FAD</name>
        <dbReference type="ChEBI" id="CHEBI:57692"/>
    </ligand>
</feature>
<feature type="binding site" evidence="1">
    <location>
        <begin position="175"/>
        <end position="210"/>
    </location>
    <ligand>
        <name>FAD</name>
        <dbReference type="ChEBI" id="CHEBI:57692"/>
    </ligand>
</feature>
<reference key="1">
    <citation type="journal article" date="2004" name="Genome Res.">
        <title>The status, quality, and expansion of the NIH full-length cDNA project: the Mammalian Gene Collection (MGC).</title>
        <authorList>
            <consortium name="The MGC Project Team"/>
        </authorList>
    </citation>
    <scope>NUCLEOTIDE SEQUENCE [LARGE SCALE MRNA]</scope>
    <source>
        <tissue>Brain</tissue>
    </source>
</reference>